<name>CLD15_MOUSE</name>
<organism>
    <name type="scientific">Mus musculus</name>
    <name type="common">Mouse</name>
    <dbReference type="NCBI Taxonomy" id="10090"/>
    <lineage>
        <taxon>Eukaryota</taxon>
        <taxon>Metazoa</taxon>
        <taxon>Chordata</taxon>
        <taxon>Craniata</taxon>
        <taxon>Vertebrata</taxon>
        <taxon>Euteleostomi</taxon>
        <taxon>Mammalia</taxon>
        <taxon>Eutheria</taxon>
        <taxon>Euarchontoglires</taxon>
        <taxon>Glires</taxon>
        <taxon>Rodentia</taxon>
        <taxon>Myomorpha</taxon>
        <taxon>Muroidea</taxon>
        <taxon>Muridae</taxon>
        <taxon>Murinae</taxon>
        <taxon>Mus</taxon>
        <taxon>Mus</taxon>
    </lineage>
</organism>
<proteinExistence type="evidence at protein level"/>
<gene>
    <name evidence="13" type="primary">Cldn15</name>
</gene>
<reference key="1">
    <citation type="journal article" date="2005" name="Science">
        <title>The transcriptional landscape of the mammalian genome.</title>
        <authorList>
            <person name="Carninci P."/>
            <person name="Kasukawa T."/>
            <person name="Katayama S."/>
            <person name="Gough J."/>
            <person name="Frith M.C."/>
            <person name="Maeda N."/>
            <person name="Oyama R."/>
            <person name="Ravasi T."/>
            <person name="Lenhard B."/>
            <person name="Wells C."/>
            <person name="Kodzius R."/>
            <person name="Shimokawa K."/>
            <person name="Bajic V.B."/>
            <person name="Brenner S.E."/>
            <person name="Batalov S."/>
            <person name="Forrest A.R."/>
            <person name="Zavolan M."/>
            <person name="Davis M.J."/>
            <person name="Wilming L.G."/>
            <person name="Aidinis V."/>
            <person name="Allen J.E."/>
            <person name="Ambesi-Impiombato A."/>
            <person name="Apweiler R."/>
            <person name="Aturaliya R.N."/>
            <person name="Bailey T.L."/>
            <person name="Bansal M."/>
            <person name="Baxter L."/>
            <person name="Beisel K.W."/>
            <person name="Bersano T."/>
            <person name="Bono H."/>
            <person name="Chalk A.M."/>
            <person name="Chiu K.P."/>
            <person name="Choudhary V."/>
            <person name="Christoffels A."/>
            <person name="Clutterbuck D.R."/>
            <person name="Crowe M.L."/>
            <person name="Dalla E."/>
            <person name="Dalrymple B.P."/>
            <person name="de Bono B."/>
            <person name="Della Gatta G."/>
            <person name="di Bernardo D."/>
            <person name="Down T."/>
            <person name="Engstrom P."/>
            <person name="Fagiolini M."/>
            <person name="Faulkner G."/>
            <person name="Fletcher C.F."/>
            <person name="Fukushima T."/>
            <person name="Furuno M."/>
            <person name="Futaki S."/>
            <person name="Gariboldi M."/>
            <person name="Georgii-Hemming P."/>
            <person name="Gingeras T.R."/>
            <person name="Gojobori T."/>
            <person name="Green R.E."/>
            <person name="Gustincich S."/>
            <person name="Harbers M."/>
            <person name="Hayashi Y."/>
            <person name="Hensch T.K."/>
            <person name="Hirokawa N."/>
            <person name="Hill D."/>
            <person name="Huminiecki L."/>
            <person name="Iacono M."/>
            <person name="Ikeo K."/>
            <person name="Iwama A."/>
            <person name="Ishikawa T."/>
            <person name="Jakt M."/>
            <person name="Kanapin A."/>
            <person name="Katoh M."/>
            <person name="Kawasawa Y."/>
            <person name="Kelso J."/>
            <person name="Kitamura H."/>
            <person name="Kitano H."/>
            <person name="Kollias G."/>
            <person name="Krishnan S.P."/>
            <person name="Kruger A."/>
            <person name="Kummerfeld S.K."/>
            <person name="Kurochkin I.V."/>
            <person name="Lareau L.F."/>
            <person name="Lazarevic D."/>
            <person name="Lipovich L."/>
            <person name="Liu J."/>
            <person name="Liuni S."/>
            <person name="McWilliam S."/>
            <person name="Madan Babu M."/>
            <person name="Madera M."/>
            <person name="Marchionni L."/>
            <person name="Matsuda H."/>
            <person name="Matsuzawa S."/>
            <person name="Miki H."/>
            <person name="Mignone F."/>
            <person name="Miyake S."/>
            <person name="Morris K."/>
            <person name="Mottagui-Tabar S."/>
            <person name="Mulder N."/>
            <person name="Nakano N."/>
            <person name="Nakauchi H."/>
            <person name="Ng P."/>
            <person name="Nilsson R."/>
            <person name="Nishiguchi S."/>
            <person name="Nishikawa S."/>
            <person name="Nori F."/>
            <person name="Ohara O."/>
            <person name="Okazaki Y."/>
            <person name="Orlando V."/>
            <person name="Pang K.C."/>
            <person name="Pavan W.J."/>
            <person name="Pavesi G."/>
            <person name="Pesole G."/>
            <person name="Petrovsky N."/>
            <person name="Piazza S."/>
            <person name="Reed J."/>
            <person name="Reid J.F."/>
            <person name="Ring B.Z."/>
            <person name="Ringwald M."/>
            <person name="Rost B."/>
            <person name="Ruan Y."/>
            <person name="Salzberg S.L."/>
            <person name="Sandelin A."/>
            <person name="Schneider C."/>
            <person name="Schoenbach C."/>
            <person name="Sekiguchi K."/>
            <person name="Semple C.A."/>
            <person name="Seno S."/>
            <person name="Sessa L."/>
            <person name="Sheng Y."/>
            <person name="Shibata Y."/>
            <person name="Shimada H."/>
            <person name="Shimada K."/>
            <person name="Silva D."/>
            <person name="Sinclair B."/>
            <person name="Sperling S."/>
            <person name="Stupka E."/>
            <person name="Sugiura K."/>
            <person name="Sultana R."/>
            <person name="Takenaka Y."/>
            <person name="Taki K."/>
            <person name="Tammoja K."/>
            <person name="Tan S.L."/>
            <person name="Tang S."/>
            <person name="Taylor M.S."/>
            <person name="Tegner J."/>
            <person name="Teichmann S.A."/>
            <person name="Ueda H.R."/>
            <person name="van Nimwegen E."/>
            <person name="Verardo R."/>
            <person name="Wei C.L."/>
            <person name="Yagi K."/>
            <person name="Yamanishi H."/>
            <person name="Zabarovsky E."/>
            <person name="Zhu S."/>
            <person name="Zimmer A."/>
            <person name="Hide W."/>
            <person name="Bult C."/>
            <person name="Grimmond S.M."/>
            <person name="Teasdale R.D."/>
            <person name="Liu E.T."/>
            <person name="Brusic V."/>
            <person name="Quackenbush J."/>
            <person name="Wahlestedt C."/>
            <person name="Mattick J.S."/>
            <person name="Hume D.A."/>
            <person name="Kai C."/>
            <person name="Sasaki D."/>
            <person name="Tomaru Y."/>
            <person name="Fukuda S."/>
            <person name="Kanamori-Katayama M."/>
            <person name="Suzuki M."/>
            <person name="Aoki J."/>
            <person name="Arakawa T."/>
            <person name="Iida J."/>
            <person name="Imamura K."/>
            <person name="Itoh M."/>
            <person name="Kato T."/>
            <person name="Kawaji H."/>
            <person name="Kawagashira N."/>
            <person name="Kawashima T."/>
            <person name="Kojima M."/>
            <person name="Kondo S."/>
            <person name="Konno H."/>
            <person name="Nakano K."/>
            <person name="Ninomiya N."/>
            <person name="Nishio T."/>
            <person name="Okada M."/>
            <person name="Plessy C."/>
            <person name="Shibata K."/>
            <person name="Shiraki T."/>
            <person name="Suzuki S."/>
            <person name="Tagami M."/>
            <person name="Waki K."/>
            <person name="Watahiki A."/>
            <person name="Okamura-Oho Y."/>
            <person name="Suzuki H."/>
            <person name="Kawai J."/>
            <person name="Hayashizaki Y."/>
        </authorList>
    </citation>
    <scope>NUCLEOTIDE SEQUENCE [LARGE SCALE MRNA]</scope>
    <source>
        <strain>C57BL/6J</strain>
        <tissue>Small intestine</tissue>
        <tissue>Stomach</tissue>
    </source>
</reference>
<reference key="2">
    <citation type="journal article" date="2004" name="Genome Res.">
        <title>The status, quality, and expansion of the NIH full-length cDNA project: the Mammalian Gene Collection (MGC).</title>
        <authorList>
            <consortium name="The MGC Project Team"/>
        </authorList>
    </citation>
    <scope>NUCLEOTIDE SEQUENCE [LARGE SCALE MRNA]</scope>
    <source>
        <strain>C57BL/6J</strain>
        <tissue>Mammary gland</tissue>
    </source>
</reference>
<reference key="3">
    <citation type="submission" date="1999-02" db="EMBL/GenBank/DDBJ databases">
        <authorList>
            <person name="Morita K."/>
            <person name="Furuse M."/>
            <person name="Tsukita S."/>
        </authorList>
    </citation>
    <scope>NUCLEOTIDE SEQUENCE [MRNA] OF 1-122</scope>
    <source>
        <tissue>Lung</tissue>
    </source>
</reference>
<reference key="4">
    <citation type="journal article" date="2005" name="Arch. Histol. Cytol.">
        <title>Heterogeneity in expression and subcellular localization of tight junction proteins, claudin-10 and -15, examined by RT-PCR and immunofluorescence microscopy.</title>
        <authorList>
            <person name="Inai T."/>
            <person name="Sengoku A."/>
            <person name="Guan X."/>
            <person name="Hirose E."/>
            <person name="Iida H."/>
            <person name="Shibata Y."/>
        </authorList>
    </citation>
    <scope>TISSUE SPECIFICITY</scope>
</reference>
<reference key="5">
    <citation type="journal article" date="2008" name="Gastroenterology">
        <title>Megaintestine in claudin-15-deficient mice.</title>
        <authorList>
            <person name="Tamura A."/>
            <person name="Kitano Y."/>
            <person name="Hata M."/>
            <person name="Katsuno T."/>
            <person name="Moriwaki K."/>
            <person name="Sasaki H."/>
            <person name="Hayashi H."/>
            <person name="Suzuki Y."/>
            <person name="Noda T."/>
            <person name="Furuse M."/>
            <person name="Tsukita S."/>
            <person name="Tsukita S."/>
        </authorList>
    </citation>
    <scope>DISRUPTION PHENOTYPE</scope>
    <scope>FUNCTION</scope>
    <scope>TISSUE SPECIFICITY</scope>
</reference>
<reference key="6">
    <citation type="journal article" date="2010" name="Cell">
        <title>A tissue-specific atlas of mouse protein phosphorylation and expression.</title>
        <authorList>
            <person name="Huttlin E.L."/>
            <person name="Jedrychowski M.P."/>
            <person name="Elias J.E."/>
            <person name="Goswami T."/>
            <person name="Rad R."/>
            <person name="Beausoleil S.A."/>
            <person name="Villen J."/>
            <person name="Haas W."/>
            <person name="Sowa M.E."/>
            <person name="Gygi S.P."/>
        </authorList>
    </citation>
    <scope>PHOSPHORYLATION [LARGE SCALE ANALYSIS] AT SER-214 AND SER-217</scope>
    <scope>IDENTIFICATION BY MASS SPECTROMETRY [LARGE SCALE ANALYSIS]</scope>
    <source>
        <tissue>Brown adipose tissue</tissue>
        <tissue>Kidney</tissue>
    </source>
</reference>
<reference key="7">
    <citation type="journal article" date="2011" name="Gastroenterology">
        <title>Loss of claudin-15, but not claudin-2, causes Na+ deficiency and glucose malabsorption in mouse small intestine.</title>
        <authorList>
            <person name="Tamura A."/>
            <person name="Hayashi H."/>
            <person name="Imasato M."/>
            <person name="Yamazaki Y."/>
            <person name="Hagiwara A."/>
            <person name="Wada M."/>
            <person name="Noda T."/>
            <person name="Watanabe M."/>
            <person name="Suzuki Y."/>
            <person name="Tsukita S."/>
        </authorList>
    </citation>
    <scope>FUNCTION</scope>
    <scope>TRANSPORTER ACTIVITY</scope>
    <scope>DISRUPTION PHENOTYPE</scope>
    <scope>TISSUE SPECIFICITY</scope>
</reference>
<reference key="8">
    <citation type="journal article" date="2013" name="Gastroenterology">
        <title>Loss of claudins 2 and 15 from mice causes defects in paracellular Na+ flow and nutrient transport in gut and leads to death from malnutrition.</title>
        <authorList>
            <person name="Wada M."/>
            <person name="Tamura A."/>
            <person name="Takahashi N."/>
            <person name="Tsukita S."/>
        </authorList>
    </citation>
    <scope>DISRUPTION PHENOTYPE</scope>
    <scope>FUNCTION</scope>
    <scope>TISSUE SPECIFICITY</scope>
</reference>
<reference key="9">
    <citation type="journal article" date="2023" name="Sci. Rep.">
        <title>The effect of claudin-15 deletion on cationic selectivity and transport in paracellular pathways of the cecum and large intestine.</title>
        <authorList>
            <person name="Hempstock W."/>
            <person name="Nagata N."/>
            <person name="Ishizuka N."/>
            <person name="Hayashi H."/>
        </authorList>
    </citation>
    <scope>FUNCTION</scope>
    <scope>DISRUPTION PHENOTYPE</scope>
    <scope>TISSUE SPECIFICITY</scope>
</reference>
<reference key="10">
    <citation type="journal article" date="2014" name="Science">
        <title>Crystal structure of a claudin provides insight into the architecture of tight junctions.</title>
        <authorList>
            <person name="Suzuki H."/>
            <person name="Nishizawa T."/>
            <person name="Tani K."/>
            <person name="Yamazaki Y."/>
            <person name="Tamura A."/>
            <person name="Ishitani R."/>
            <person name="Dohmae N."/>
            <person name="Tsukita S."/>
            <person name="Nureki O."/>
            <person name="Fujiyoshi Y."/>
        </authorList>
    </citation>
    <scope>X-RAY CRYSTALLOGRAPHY (2.4 ANGSTROMS) OF 1-194 OF MUTANT ALA-102/ALA-183/ALA-184/ALA-185</scope>
    <scope>SUBCELLULAR LOCATION</scope>
    <scope>SUBUNIT</scope>
    <scope>MUTAGENESIS OF MET-68; CYS-102; 146-PHE-PHE-147 AND 183-CYS--CYS-185</scope>
    <scope>TOPOLOGY</scope>
    <scope>DISULFIDE BOND</scope>
    <scope>PALMITOYLATION</scope>
</reference>
<keyword id="KW-0002">3D-structure</keyword>
<keyword id="KW-0965">Cell junction</keyword>
<keyword id="KW-1003">Cell membrane</keyword>
<keyword id="KW-1015">Disulfide bond</keyword>
<keyword id="KW-0406">Ion transport</keyword>
<keyword id="KW-0449">Lipoprotein</keyword>
<keyword id="KW-0472">Membrane</keyword>
<keyword id="KW-0564">Palmitate</keyword>
<keyword id="KW-0597">Phosphoprotein</keyword>
<keyword id="KW-1185">Reference proteome</keyword>
<keyword id="KW-0796">Tight junction</keyword>
<keyword id="KW-0812">Transmembrane</keyword>
<keyword id="KW-1133">Transmembrane helix</keyword>
<keyword id="KW-0813">Transport</keyword>
<sequence length="227" mass="24280">MSVAVETFGFFMSALGLLMLGLTLSNSYWRVSTVHGNVITTNTIFENLWYSCATDSLGVSNCWDFPSMLALSGYVQGCRALMITAILLGFLGLFLGMVGLRCTNVGNMDLSKKAKLLAIAGTLHILAGACGMVAISWYAVNITTDFFNPLYAGTKYELGPALYLGWSASLLSILGGICVFSTCCCSSKEEPATRAGLPYKPSTVVIPRATSDESDISFGKYGKNAYV</sequence>
<protein>
    <recommendedName>
        <fullName evidence="11">Claudin-15</fullName>
    </recommendedName>
</protein>
<accession>Q9Z0S5</accession>
<accession>Q9D7Z0</accession>
<accession>Q9D8A6</accession>
<feature type="chain" id="PRO_0000144772" description="Claudin-15">
    <location>
        <begin position="1"/>
        <end position="227"/>
    </location>
</feature>
<feature type="topological domain" description="Cytoplasmic" evidence="9">
    <location>
        <position position="1"/>
    </location>
</feature>
<feature type="transmembrane region" description="Helical">
    <location>
        <begin position="2"/>
        <end position="24"/>
    </location>
</feature>
<feature type="topological domain" description="Extracellular" evidence="9">
    <location>
        <begin position="25"/>
        <end position="74"/>
    </location>
</feature>
<feature type="transmembrane region" description="Helical">
    <location>
        <begin position="75"/>
        <end position="99"/>
    </location>
</feature>
<feature type="topological domain" description="Cytoplasmic" evidence="9">
    <location>
        <begin position="100"/>
        <end position="115"/>
    </location>
</feature>
<feature type="transmembrane region" description="Helical">
    <location>
        <begin position="116"/>
        <end position="140"/>
    </location>
</feature>
<feature type="topological domain" description="Extracellular" evidence="9">
    <location>
        <begin position="141"/>
        <end position="159"/>
    </location>
</feature>
<feature type="transmembrane region" description="Helical">
    <location>
        <begin position="160"/>
        <end position="182"/>
    </location>
</feature>
<feature type="topological domain" description="Cytoplasmic" evidence="9">
    <location>
        <begin position="183"/>
        <end position="227"/>
    </location>
</feature>
<feature type="region of interest" description="Important for the formation of tight-junction strand-like structures">
    <location>
        <begin position="146"/>
        <end position="147"/>
    </location>
</feature>
<feature type="site" description="Important for Na(+)-selective paracellular ion transport" evidence="1">
    <location>
        <position position="55"/>
    </location>
</feature>
<feature type="site" description="Important for Na(+)-selective paracellular ion transport" evidence="1">
    <location>
        <position position="64"/>
    </location>
</feature>
<feature type="site" description="Important for the formation of tight-junction strand-like structures">
    <location>
        <position position="68"/>
    </location>
</feature>
<feature type="modified residue" description="Phosphoserine" evidence="3">
    <location>
        <position position="111"/>
    </location>
</feature>
<feature type="modified residue" description="Phosphoserine" evidence="2">
    <location>
        <position position="211"/>
    </location>
</feature>
<feature type="modified residue" description="Phosphoserine" evidence="14">
    <location>
        <position position="214"/>
    </location>
</feature>
<feature type="modified residue" description="Phosphoserine" evidence="14">
    <location>
        <position position="217"/>
    </location>
</feature>
<feature type="disulfide bond" evidence="9">
    <location>
        <begin position="52"/>
        <end position="62"/>
    </location>
</feature>
<feature type="mutagenesis site" description="Abolishes formation of tight-junction strand-like structures." evidence="9">
    <original>M</original>
    <variation>A</variation>
    <variation>E</variation>
    <location>
        <position position="68"/>
    </location>
</feature>
<feature type="mutagenesis site" description="No effect on formation of tight-junction strand-like structures." evidence="9">
    <original>M</original>
    <variation>I</variation>
    <variation>L</variation>
    <location>
        <position position="68"/>
    </location>
</feature>
<feature type="mutagenesis site" description="Abolishes palmitoylation; when associated with 183-A--A-185." evidence="9">
    <original>C</original>
    <variation>A</variation>
    <location>
        <position position="102"/>
    </location>
</feature>
<feature type="mutagenesis site" description="Abolishes formation of tight-junction strand-like structures." evidence="9">
    <original>FF</original>
    <variation>AA</variation>
    <location>
        <begin position="146"/>
        <end position="147"/>
    </location>
</feature>
<feature type="mutagenesis site" description="Abolishes palmitoylation; when associated with A-102." evidence="9">
    <original>CCC</original>
    <variation>AAA</variation>
    <location>
        <begin position="183"/>
        <end position="185"/>
    </location>
</feature>
<feature type="sequence conflict" description="In Ref. 1; BAB25544." evidence="12" ref="1">
    <original>S</original>
    <variation>L</variation>
    <location>
        <position position="2"/>
    </location>
</feature>
<feature type="sequence conflict" description="In Ref. 1; BAB25544." evidence="12" ref="1">
    <original>D</original>
    <variation>N</variation>
    <location>
        <position position="212"/>
    </location>
</feature>
<feature type="helix" evidence="15">
    <location>
        <begin position="2"/>
        <end position="24"/>
    </location>
</feature>
<feature type="strand" evidence="15">
    <location>
        <begin position="29"/>
        <end position="32"/>
    </location>
</feature>
<feature type="strand" evidence="15">
    <location>
        <begin position="43"/>
        <end position="46"/>
    </location>
</feature>
<feature type="strand" evidence="15">
    <location>
        <begin position="48"/>
        <end position="54"/>
    </location>
</feature>
<feature type="strand" evidence="15">
    <location>
        <begin position="60"/>
        <end position="64"/>
    </location>
</feature>
<feature type="helix" evidence="15">
    <location>
        <begin position="67"/>
        <end position="72"/>
    </location>
</feature>
<feature type="helix" evidence="15">
    <location>
        <begin position="75"/>
        <end position="99"/>
    </location>
</feature>
<feature type="strand" evidence="15">
    <location>
        <begin position="100"/>
        <end position="102"/>
    </location>
</feature>
<feature type="helix" evidence="15">
    <location>
        <begin position="110"/>
        <end position="146"/>
    </location>
</feature>
<feature type="strand" evidence="15">
    <location>
        <begin position="156"/>
        <end position="158"/>
    </location>
</feature>
<feature type="helix" evidence="15">
    <location>
        <begin position="160"/>
        <end position="184"/>
    </location>
</feature>
<evidence type="ECO:0000250" key="1"/>
<evidence type="ECO:0000250" key="2">
    <source>
        <dbReference type="UniProtKB" id="D3ZQJ0"/>
    </source>
</evidence>
<evidence type="ECO:0000250" key="3">
    <source>
        <dbReference type="UniProtKB" id="P56746"/>
    </source>
</evidence>
<evidence type="ECO:0000255" key="4"/>
<evidence type="ECO:0000269" key="5">
    <source>
    </source>
</evidence>
<evidence type="ECO:0000269" key="6">
    <source>
    </source>
</evidence>
<evidence type="ECO:0000269" key="7">
    <source>
    </source>
</evidence>
<evidence type="ECO:0000269" key="8">
    <source>
    </source>
</evidence>
<evidence type="ECO:0000269" key="9">
    <source>
    </source>
</evidence>
<evidence type="ECO:0000269" key="10">
    <source>
    </source>
</evidence>
<evidence type="ECO:0000303" key="11">
    <source>
    </source>
</evidence>
<evidence type="ECO:0000305" key="12"/>
<evidence type="ECO:0000312" key="13">
    <source>
        <dbReference type="MGI" id="MGI:1913103"/>
    </source>
</evidence>
<evidence type="ECO:0007744" key="14">
    <source>
    </source>
</evidence>
<evidence type="ECO:0007829" key="15">
    <source>
        <dbReference type="PDB" id="4P79"/>
    </source>
</evidence>
<comment type="function">
    <text evidence="6 7 8 10">Forms paracellular channels: polymerizes in tight junction strands with cation- and water-selective channels through the strands, conveying epithelial permeability in a process known as paracellular tight junction permeability (PubMed:18242218, PubMed:20727355, PubMed:23089202, PubMed:37100833). In intestinal epithelium, allows for sodium and water fluxes from the peritoneal side to the lumen of the intestine to regulate nutrient absorption and intestinal morphogenesis (PubMed:18242218, PubMed:20727355, PubMed:23089202, PubMed:37100833).</text>
</comment>
<comment type="catalytic activity">
    <reaction evidence="7">
        <text>Na(+)(in) = Na(+)(out)</text>
        <dbReference type="Rhea" id="RHEA:34963"/>
        <dbReference type="ChEBI" id="CHEBI:29101"/>
    </reaction>
</comment>
<comment type="catalytic activity">
    <reaction evidence="7">
        <text>K(+)(in) = K(+)(out)</text>
        <dbReference type="Rhea" id="RHEA:29463"/>
        <dbReference type="ChEBI" id="CHEBI:29103"/>
    </reaction>
</comment>
<comment type="catalytic activity">
    <reaction evidence="7">
        <text>Cs(+)(in) = Cs(+)(out)</text>
        <dbReference type="Rhea" id="RHEA:78555"/>
        <dbReference type="ChEBI" id="CHEBI:49547"/>
    </reaction>
</comment>
<comment type="catalytic activity">
    <reaction evidence="7">
        <text>Rb(+)(in) = Rb(+)(out)</text>
        <dbReference type="Rhea" id="RHEA:78547"/>
        <dbReference type="ChEBI" id="CHEBI:49847"/>
    </reaction>
</comment>
<comment type="catalytic activity">
    <reaction evidence="7">
        <text>Li(+)(in) = Li(+)(out)</text>
        <dbReference type="Rhea" id="RHEA:78551"/>
        <dbReference type="ChEBI" id="CHEBI:49713"/>
    </reaction>
</comment>
<comment type="catalytic activity">
    <reaction evidence="3">
        <text>NH4(+)(in) = NH4(+)(out)</text>
        <dbReference type="Rhea" id="RHEA:28747"/>
        <dbReference type="ChEBI" id="CHEBI:28938"/>
    </reaction>
</comment>
<comment type="catalytic activity">
    <reaction evidence="3">
        <text>methylamine(out) = methylamine(in)</text>
        <dbReference type="Rhea" id="RHEA:74391"/>
        <dbReference type="ChEBI" id="CHEBI:59338"/>
    </reaction>
</comment>
<comment type="catalytic activity">
    <reaction evidence="3">
        <text>H2O(in) = H2O(out)</text>
        <dbReference type="Rhea" id="RHEA:29667"/>
        <dbReference type="ChEBI" id="CHEBI:15377"/>
    </reaction>
</comment>
<comment type="subunit">
    <text evidence="3 9">Can form homo- and heteropolymeric tight junction strands.</text>
</comment>
<comment type="subcellular location">
    <subcellularLocation>
        <location evidence="3">Cell junction</location>
        <location evidence="3">Tight junction</location>
    </subcellularLocation>
    <subcellularLocation>
        <location evidence="3">Cell membrane</location>
        <topology evidence="4">Multi-pass membrane protein</topology>
    </subcellularLocation>
</comment>
<comment type="tissue specificity">
    <text evidence="5 6 7 8 10">Detected in duodenum, jejunum and ileum. Detected on intestinal villi and crypts (at protein level). Ubiquitous. Detected in small and large intestine, colon, jejunum, heart, kidney and lung.</text>
</comment>
<comment type="PTM">
    <text evidence="9">Palmitoylated when heterogeneously expressed in S.frugiperda cells.</text>
</comment>
<comment type="disruption phenotype">
    <text evidence="6 7 8 10">No visible phenotype at birth and during the first four weeks after birth. After about eight weeks, the upper part of the small intestine is abnormally increased both in length and in thickness with enlarged villi and crypts. The villi are about two times larger than normal, and each is associated with about forty abnormally large crypts instead of the normally observed ratio of ten crypts per villus. In contrast, there is no difference in the size of the lower part of the small intestine. The body weight of mutant mice does not differ from that of wild-type littermates (PubMed:18242218). According to PubMed:20727355, the intestinal mucosa from newborn and adult mutant mice displays strongly decreased transepithelial conductance with strongly reduced paracellular Na(+) permeability, but no major changes in paracellular permeability to Cl(-). Adults show strongly decreased Na(+) levels in the lumen of the small intestine. Mutant mice also display decreased intestinal glucose uptake, probably due to decreased Na(+) levels. According to PubMed:23089202, mutant mice lacking both Cldn2 and Cldn15 display no visible phenotype at birth, but show decreased growth after about 10 days, severe developmental retardation about 14 days after birth, and then die from malnutrition. None survive more than 25 days after birth. Mice lacking both Cldn2 and Cldn15 show abnormally low Na(+) levels in the intestine, leading to decreased intestinal glucose uptake; glucose uptake can be restored to normal levels by addition of Na(+). Likewise, mice lacking both Cldn2 and Cldn15 show decreased intestinal uptake of milk fat, fatty acids, bile acids and amino acids; again, normal bile acid and amino acid uptake can be restored by the addition of Na(+). According to PubMed:37100833, mutant mice display decreased paracellular Na(+) permeability in the cecum.</text>
</comment>
<comment type="similarity">
    <text evidence="12">Belongs to the claudin family.</text>
</comment>
<dbReference type="EMBL" id="AK008227">
    <property type="protein sequence ID" value="BAB25544.1"/>
    <property type="molecule type" value="mRNA"/>
</dbReference>
<dbReference type="EMBL" id="AK008683">
    <property type="protein sequence ID" value="BAB25831.1"/>
    <property type="molecule type" value="mRNA"/>
</dbReference>
<dbReference type="EMBL" id="BC023428">
    <property type="protein sequence ID" value="AAH23428.1"/>
    <property type="molecule type" value="mRNA"/>
</dbReference>
<dbReference type="EMBL" id="AF124427">
    <property type="protein sequence ID" value="AAD17331.1"/>
    <property type="molecule type" value="mRNA"/>
</dbReference>
<dbReference type="CCDS" id="CCDS19758.1"/>
<dbReference type="RefSeq" id="NP_068365.1">
    <property type="nucleotide sequence ID" value="NM_021719.4"/>
</dbReference>
<dbReference type="PDB" id="4P79">
    <property type="method" value="X-ray"/>
    <property type="resolution" value="2.40 A"/>
    <property type="chains" value="A=2-194"/>
</dbReference>
<dbReference type="PDBsum" id="4P79"/>
<dbReference type="SMR" id="Q9Z0S5"/>
<dbReference type="FunCoup" id="Q9Z0S5">
    <property type="interactions" value="364"/>
</dbReference>
<dbReference type="STRING" id="10090.ENSMUSP00000106722"/>
<dbReference type="TCDB" id="1.H.1.1.12">
    <property type="family name" value="the claudin tight junction (claudin1) family"/>
</dbReference>
<dbReference type="iPTMnet" id="Q9Z0S5"/>
<dbReference type="PhosphoSitePlus" id="Q9Z0S5"/>
<dbReference type="PaxDb" id="10090-ENSMUSP00000106722"/>
<dbReference type="PeptideAtlas" id="Q9Z0S5"/>
<dbReference type="ProteomicsDB" id="283578"/>
<dbReference type="Antibodypedia" id="16744">
    <property type="antibodies" value="196 antibodies from 22 providers"/>
</dbReference>
<dbReference type="DNASU" id="60363"/>
<dbReference type="Ensembl" id="ENSMUST00000001790.6">
    <property type="protein sequence ID" value="ENSMUSP00000001790.5"/>
    <property type="gene ID" value="ENSMUSG00000001739.15"/>
</dbReference>
<dbReference type="Ensembl" id="ENSMUST00000111093.8">
    <property type="protein sequence ID" value="ENSMUSP00000106722.2"/>
    <property type="gene ID" value="ENSMUSG00000001739.15"/>
</dbReference>
<dbReference type="GeneID" id="60363"/>
<dbReference type="KEGG" id="mmu:60363"/>
<dbReference type="UCSC" id="uc009abg.2">
    <property type="organism name" value="mouse"/>
</dbReference>
<dbReference type="AGR" id="MGI:1913103"/>
<dbReference type="CTD" id="24146"/>
<dbReference type="MGI" id="MGI:1913103">
    <property type="gene designation" value="Cldn15"/>
</dbReference>
<dbReference type="VEuPathDB" id="HostDB:ENSMUSG00000001739"/>
<dbReference type="eggNOG" id="ENOG502RYAR">
    <property type="taxonomic scope" value="Eukaryota"/>
</dbReference>
<dbReference type="GeneTree" id="ENSGT00940000157650"/>
<dbReference type="HOGENOM" id="CLU_076370_0_2_1"/>
<dbReference type="InParanoid" id="Q9Z0S5"/>
<dbReference type="OMA" id="DQHWRES"/>
<dbReference type="OrthoDB" id="9933182at2759"/>
<dbReference type="PhylomeDB" id="Q9Z0S5"/>
<dbReference type="TreeFam" id="TF331936"/>
<dbReference type="BioGRID-ORCS" id="60363">
    <property type="hits" value="7 hits in 77 CRISPR screens"/>
</dbReference>
<dbReference type="ChiTaRS" id="Cldn15">
    <property type="organism name" value="mouse"/>
</dbReference>
<dbReference type="EvolutionaryTrace" id="Q9Z0S5"/>
<dbReference type="PRO" id="PR:Q9Z0S5"/>
<dbReference type="Proteomes" id="UP000000589">
    <property type="component" value="Chromosome 5"/>
</dbReference>
<dbReference type="RNAct" id="Q9Z0S5">
    <property type="molecule type" value="protein"/>
</dbReference>
<dbReference type="Bgee" id="ENSMUSG00000001739">
    <property type="expression patterns" value="Expressed in small intestine Peyer's patch and 120 other cell types or tissues"/>
</dbReference>
<dbReference type="GO" id="GO:0005923">
    <property type="term" value="C:bicellular tight junction"/>
    <property type="evidence" value="ECO:0000250"/>
    <property type="project" value="UniProtKB"/>
</dbReference>
<dbReference type="GO" id="GO:0016328">
    <property type="term" value="C:lateral plasma membrane"/>
    <property type="evidence" value="ECO:0000314"/>
    <property type="project" value="MGI"/>
</dbReference>
<dbReference type="GO" id="GO:0070160">
    <property type="term" value="C:tight junction"/>
    <property type="evidence" value="ECO:0000314"/>
    <property type="project" value="UniProtKB"/>
</dbReference>
<dbReference type="GO" id="GO:0042802">
    <property type="term" value="F:identical protein binding"/>
    <property type="evidence" value="ECO:0000250"/>
    <property type="project" value="UniProtKB"/>
</dbReference>
<dbReference type="GO" id="GO:0160187">
    <property type="term" value="F:paracellular tight junction channel activity"/>
    <property type="evidence" value="ECO:0000250"/>
    <property type="project" value="UniProtKB"/>
</dbReference>
<dbReference type="GO" id="GO:0005198">
    <property type="term" value="F:structural molecule activity"/>
    <property type="evidence" value="ECO:0007669"/>
    <property type="project" value="InterPro"/>
</dbReference>
<dbReference type="GO" id="GO:0016338">
    <property type="term" value="P:calcium-independent cell-cell adhesion via plasma membrane cell-adhesion molecules"/>
    <property type="evidence" value="ECO:0000250"/>
    <property type="project" value="UniProtKB"/>
</dbReference>
<dbReference type="GO" id="GO:0006811">
    <property type="term" value="P:monoatomic ion transport"/>
    <property type="evidence" value="ECO:0007669"/>
    <property type="project" value="UniProtKB-KW"/>
</dbReference>
<dbReference type="GO" id="GO:0160184">
    <property type="term" value="P:paracellular transport"/>
    <property type="evidence" value="ECO:0000315"/>
    <property type="project" value="UniProtKB"/>
</dbReference>
<dbReference type="GO" id="GO:1903985">
    <property type="term" value="P:regulation of intestinal D-glucose absorption"/>
    <property type="evidence" value="ECO:0000315"/>
    <property type="project" value="UniProtKB"/>
</dbReference>
<dbReference type="GO" id="GO:1904729">
    <property type="term" value="P:regulation of intestinal lipid absorption"/>
    <property type="evidence" value="ECO:0000315"/>
    <property type="project" value="UniProtKB"/>
</dbReference>
<dbReference type="FunFam" id="1.20.140.150:FF:000001">
    <property type="entry name" value="Claudin"/>
    <property type="match status" value="1"/>
</dbReference>
<dbReference type="Gene3D" id="1.20.140.150">
    <property type="match status" value="1"/>
</dbReference>
<dbReference type="InterPro" id="IPR006187">
    <property type="entry name" value="Claudin"/>
</dbReference>
<dbReference type="InterPro" id="IPR008094">
    <property type="entry name" value="Claudin15"/>
</dbReference>
<dbReference type="InterPro" id="IPR017974">
    <property type="entry name" value="Claudin_CS"/>
</dbReference>
<dbReference type="InterPro" id="IPR004031">
    <property type="entry name" value="PMP22/EMP/MP20/Claudin"/>
</dbReference>
<dbReference type="PANTHER" id="PTHR12002">
    <property type="entry name" value="CLAUDIN"/>
    <property type="match status" value="1"/>
</dbReference>
<dbReference type="Pfam" id="PF00822">
    <property type="entry name" value="PMP22_Claudin"/>
    <property type="match status" value="1"/>
</dbReference>
<dbReference type="PRINTS" id="PR01077">
    <property type="entry name" value="CLAUDIN"/>
</dbReference>
<dbReference type="PRINTS" id="PR01718">
    <property type="entry name" value="CLAUDIN15"/>
</dbReference>
<dbReference type="PROSITE" id="PS01346">
    <property type="entry name" value="CLAUDIN"/>
    <property type="match status" value="1"/>
</dbReference>